<evidence type="ECO:0000250" key="1"/>
<evidence type="ECO:0000255" key="2">
    <source>
        <dbReference type="PROSITE-ProRule" id="PRU00541"/>
    </source>
</evidence>
<evidence type="ECO:0000255" key="3">
    <source>
        <dbReference type="PROSITE-ProRule" id="PRU00542"/>
    </source>
</evidence>
<evidence type="ECO:0000256" key="4">
    <source>
        <dbReference type="SAM" id="MobiDB-lite"/>
    </source>
</evidence>
<evidence type="ECO:0000305" key="5"/>
<name>DBP6_LODEL</name>
<proteinExistence type="inferred from homology"/>
<reference key="1">
    <citation type="journal article" date="2009" name="Nature">
        <title>Evolution of pathogenicity and sexual reproduction in eight Candida genomes.</title>
        <authorList>
            <person name="Butler G."/>
            <person name="Rasmussen M.D."/>
            <person name="Lin M.F."/>
            <person name="Santos M.A.S."/>
            <person name="Sakthikumar S."/>
            <person name="Munro C.A."/>
            <person name="Rheinbay E."/>
            <person name="Grabherr M."/>
            <person name="Forche A."/>
            <person name="Reedy J.L."/>
            <person name="Agrafioti I."/>
            <person name="Arnaud M.B."/>
            <person name="Bates S."/>
            <person name="Brown A.J.P."/>
            <person name="Brunke S."/>
            <person name="Costanzo M.C."/>
            <person name="Fitzpatrick D.A."/>
            <person name="de Groot P.W.J."/>
            <person name="Harris D."/>
            <person name="Hoyer L.L."/>
            <person name="Hube B."/>
            <person name="Klis F.M."/>
            <person name="Kodira C."/>
            <person name="Lennard N."/>
            <person name="Logue M.E."/>
            <person name="Martin R."/>
            <person name="Neiman A.M."/>
            <person name="Nikolaou E."/>
            <person name="Quail M.A."/>
            <person name="Quinn J."/>
            <person name="Santos M.C."/>
            <person name="Schmitzberger F.F."/>
            <person name="Sherlock G."/>
            <person name="Shah P."/>
            <person name="Silverstein K.A.T."/>
            <person name="Skrzypek M.S."/>
            <person name="Soll D."/>
            <person name="Staggs R."/>
            <person name="Stansfield I."/>
            <person name="Stumpf M.P.H."/>
            <person name="Sudbery P.E."/>
            <person name="Srikantha T."/>
            <person name="Zeng Q."/>
            <person name="Berman J."/>
            <person name="Berriman M."/>
            <person name="Heitman J."/>
            <person name="Gow N.A.R."/>
            <person name="Lorenz M.C."/>
            <person name="Birren B.W."/>
            <person name="Kellis M."/>
            <person name="Cuomo C.A."/>
        </authorList>
    </citation>
    <scope>NUCLEOTIDE SEQUENCE [LARGE SCALE GENOMIC DNA]</scope>
    <source>
        <strain>ATCC 11503 / BCRC 21390 / CBS 2605 / JCM 1781 / NBRC 1676 / NRRL YB-4239</strain>
    </source>
</reference>
<gene>
    <name type="primary">DBP6</name>
    <name type="ORF">LELG_05415</name>
</gene>
<feature type="chain" id="PRO_0000294660" description="ATP-dependent RNA helicase DBP6">
    <location>
        <begin position="1"/>
        <end position="663"/>
    </location>
</feature>
<feature type="domain" description="Helicase ATP-binding" evidence="2">
    <location>
        <begin position="264"/>
        <end position="448"/>
    </location>
</feature>
<feature type="domain" description="Helicase C-terminal" evidence="3">
    <location>
        <begin position="485"/>
        <end position="642"/>
    </location>
</feature>
<feature type="region of interest" description="Disordered" evidence="4">
    <location>
        <begin position="1"/>
        <end position="119"/>
    </location>
</feature>
<feature type="region of interest" description="Disordered" evidence="4">
    <location>
        <begin position="153"/>
        <end position="200"/>
    </location>
</feature>
<feature type="short sequence motif" description="Q motif">
    <location>
        <begin position="222"/>
        <end position="250"/>
    </location>
</feature>
<feature type="short sequence motif" description="DEAD box">
    <location>
        <begin position="384"/>
        <end position="387"/>
    </location>
</feature>
<feature type="compositionally biased region" description="Acidic residues" evidence="4">
    <location>
        <begin position="39"/>
        <end position="79"/>
    </location>
</feature>
<feature type="compositionally biased region" description="Acidic residues" evidence="4">
    <location>
        <begin position="88"/>
        <end position="101"/>
    </location>
</feature>
<feature type="compositionally biased region" description="Basic and acidic residues" evidence="4">
    <location>
        <begin position="102"/>
        <end position="111"/>
    </location>
</feature>
<feature type="compositionally biased region" description="Basic and acidic residues" evidence="4">
    <location>
        <begin position="168"/>
        <end position="177"/>
    </location>
</feature>
<feature type="binding site" evidence="2">
    <location>
        <begin position="277"/>
        <end position="284"/>
    </location>
    <ligand>
        <name>ATP</name>
        <dbReference type="ChEBI" id="CHEBI:30616"/>
    </ligand>
</feature>
<comment type="function">
    <text evidence="1">ATP-binding RNA helicase involved in the biogenesis of 60S ribosomal subunits and is required for the normal formation of 25S and 5.8S rRNAs.</text>
</comment>
<comment type="catalytic activity">
    <reaction>
        <text>ATP + H2O = ADP + phosphate + H(+)</text>
        <dbReference type="Rhea" id="RHEA:13065"/>
        <dbReference type="ChEBI" id="CHEBI:15377"/>
        <dbReference type="ChEBI" id="CHEBI:15378"/>
        <dbReference type="ChEBI" id="CHEBI:30616"/>
        <dbReference type="ChEBI" id="CHEBI:43474"/>
        <dbReference type="ChEBI" id="CHEBI:456216"/>
        <dbReference type="EC" id="3.6.4.13"/>
    </reaction>
</comment>
<comment type="subunit">
    <text evidence="1">Associated with pre-ribosomal particles.</text>
</comment>
<comment type="subcellular location">
    <subcellularLocation>
        <location evidence="1">Nucleus</location>
        <location evidence="1">Nucleolus</location>
    </subcellularLocation>
</comment>
<comment type="domain">
    <text>The Q motif is unique to and characteristic of the DEAD box family of RNA helicases and controls ATP binding and hydrolysis.</text>
</comment>
<comment type="similarity">
    <text evidence="5">Belongs to the DEAD box helicase family. DDX51/DBP6 subfamily.</text>
</comment>
<dbReference type="EC" id="3.6.4.13"/>
<dbReference type="EMBL" id="CH981532">
    <property type="protein sequence ID" value="EDK47234.1"/>
    <property type="molecule type" value="Genomic_DNA"/>
</dbReference>
<dbReference type="RefSeq" id="XP_001523569.1">
    <property type="nucleotide sequence ID" value="XM_001523519.1"/>
</dbReference>
<dbReference type="SMR" id="A5E726"/>
<dbReference type="FunCoup" id="A5E726">
    <property type="interactions" value="845"/>
</dbReference>
<dbReference type="STRING" id="379508.A5E726"/>
<dbReference type="GeneID" id="5230558"/>
<dbReference type="KEGG" id="lel:PVL30_002514"/>
<dbReference type="VEuPathDB" id="FungiDB:LELG_05415"/>
<dbReference type="eggNOG" id="KOG0350">
    <property type="taxonomic scope" value="Eukaryota"/>
</dbReference>
<dbReference type="HOGENOM" id="CLU_003041_15_2_1"/>
<dbReference type="InParanoid" id="A5E726"/>
<dbReference type="OMA" id="HLEWLVI"/>
<dbReference type="OrthoDB" id="3370at2759"/>
<dbReference type="Proteomes" id="UP000001996">
    <property type="component" value="Unassembled WGS sequence"/>
</dbReference>
<dbReference type="GO" id="GO:0005829">
    <property type="term" value="C:cytosol"/>
    <property type="evidence" value="ECO:0007669"/>
    <property type="project" value="TreeGrafter"/>
</dbReference>
<dbReference type="GO" id="GO:0005730">
    <property type="term" value="C:nucleolus"/>
    <property type="evidence" value="ECO:0007669"/>
    <property type="project" value="UniProtKB-SubCell"/>
</dbReference>
<dbReference type="GO" id="GO:0030687">
    <property type="term" value="C:preribosome, large subunit precursor"/>
    <property type="evidence" value="ECO:0007669"/>
    <property type="project" value="EnsemblFungi"/>
</dbReference>
<dbReference type="GO" id="GO:0005524">
    <property type="term" value="F:ATP binding"/>
    <property type="evidence" value="ECO:0007669"/>
    <property type="project" value="UniProtKB-KW"/>
</dbReference>
<dbReference type="GO" id="GO:0016887">
    <property type="term" value="F:ATP hydrolysis activity"/>
    <property type="evidence" value="ECO:0007669"/>
    <property type="project" value="RHEA"/>
</dbReference>
<dbReference type="GO" id="GO:0003723">
    <property type="term" value="F:RNA binding"/>
    <property type="evidence" value="ECO:0007669"/>
    <property type="project" value="UniProtKB-KW"/>
</dbReference>
<dbReference type="GO" id="GO:0003724">
    <property type="term" value="F:RNA helicase activity"/>
    <property type="evidence" value="ECO:0007669"/>
    <property type="project" value="UniProtKB-EC"/>
</dbReference>
<dbReference type="GO" id="GO:0000466">
    <property type="term" value="P:maturation of 5.8S rRNA from tricistronic rRNA transcript (SSU-rRNA, 5.8S rRNA, LSU-rRNA)"/>
    <property type="evidence" value="ECO:0007669"/>
    <property type="project" value="EnsemblFungi"/>
</dbReference>
<dbReference type="GO" id="GO:0000463">
    <property type="term" value="P:maturation of LSU-rRNA from tricistronic rRNA transcript (SSU-rRNA, 5.8S rRNA, LSU-rRNA)"/>
    <property type="evidence" value="ECO:0007669"/>
    <property type="project" value="EnsemblFungi"/>
</dbReference>
<dbReference type="CDD" id="cd17956">
    <property type="entry name" value="DEADc_DDX51"/>
    <property type="match status" value="1"/>
</dbReference>
<dbReference type="CDD" id="cd18787">
    <property type="entry name" value="SF2_C_DEAD"/>
    <property type="match status" value="1"/>
</dbReference>
<dbReference type="Gene3D" id="3.40.50.300">
    <property type="entry name" value="P-loop containing nucleotide triphosphate hydrolases"/>
    <property type="match status" value="2"/>
</dbReference>
<dbReference type="InterPro" id="IPR011545">
    <property type="entry name" value="DEAD/DEAH_box_helicase_dom"/>
</dbReference>
<dbReference type="InterPro" id="IPR050079">
    <property type="entry name" value="DEAD_box_RNA_helicase"/>
</dbReference>
<dbReference type="InterPro" id="IPR014001">
    <property type="entry name" value="Helicase_ATP-bd"/>
</dbReference>
<dbReference type="InterPro" id="IPR001650">
    <property type="entry name" value="Helicase_C-like"/>
</dbReference>
<dbReference type="InterPro" id="IPR027417">
    <property type="entry name" value="P-loop_NTPase"/>
</dbReference>
<dbReference type="InterPro" id="IPR000629">
    <property type="entry name" value="RNA-helicase_DEAD-box_CS"/>
</dbReference>
<dbReference type="InterPro" id="IPR014014">
    <property type="entry name" value="RNA_helicase_DEAD_Q_motif"/>
</dbReference>
<dbReference type="PANTHER" id="PTHR47959:SF1">
    <property type="entry name" value="ATP-DEPENDENT RNA HELICASE DBPA"/>
    <property type="match status" value="1"/>
</dbReference>
<dbReference type="PANTHER" id="PTHR47959">
    <property type="entry name" value="ATP-DEPENDENT RNA HELICASE RHLE-RELATED"/>
    <property type="match status" value="1"/>
</dbReference>
<dbReference type="Pfam" id="PF00270">
    <property type="entry name" value="DEAD"/>
    <property type="match status" value="1"/>
</dbReference>
<dbReference type="Pfam" id="PF00271">
    <property type="entry name" value="Helicase_C"/>
    <property type="match status" value="1"/>
</dbReference>
<dbReference type="SMART" id="SM00487">
    <property type="entry name" value="DEXDc"/>
    <property type="match status" value="1"/>
</dbReference>
<dbReference type="SMART" id="SM00490">
    <property type="entry name" value="HELICc"/>
    <property type="match status" value="1"/>
</dbReference>
<dbReference type="SUPFAM" id="SSF52540">
    <property type="entry name" value="P-loop containing nucleoside triphosphate hydrolases"/>
    <property type="match status" value="1"/>
</dbReference>
<dbReference type="PROSITE" id="PS00039">
    <property type="entry name" value="DEAD_ATP_HELICASE"/>
    <property type="match status" value="1"/>
</dbReference>
<dbReference type="PROSITE" id="PS51192">
    <property type="entry name" value="HELICASE_ATP_BIND_1"/>
    <property type="match status" value="1"/>
</dbReference>
<dbReference type="PROSITE" id="PS51194">
    <property type="entry name" value="HELICASE_CTER"/>
    <property type="match status" value="1"/>
</dbReference>
<dbReference type="PROSITE" id="PS51195">
    <property type="entry name" value="Q_MOTIF"/>
    <property type="match status" value="1"/>
</dbReference>
<accession>A5E726</accession>
<sequence>MFGVRYDPEESLLTPTLYHNGRFLPNLKKRKRRVQDHDVVDDDVVVFDNDKDEEEMNKEKKEEEEEEEEEEEETDNSEGESEKSESGSESESESESESESDVDGKHMKEELEDKDDAMEVDTIIEDNEYSGKHKSIFDKFKLSVTRTVNDDVVHSSRDEEEDFQKQSGSREKEKEEVVETQDLAPLPQPQLPRDRKLNSSTQHSANLDWLTTPEYIAIADTKPFSEFPLSPFMHENLESLGFENAFAVQVGVLSKLLPEIQANKLRPDAFGDVLVNASTGSGKTLAYSIPIIESLKDRVVPRVRAIVLVPTKPLINQVRATMLQLALGTNLNIVSLKNDISIREESERLIELVPDVVISTPGRLVEHLAMDSISLSSLRYLVVDEADRLLNQSFQNWSQILISKIHLQQVYDVANVWSLKVQKFIFSATLTTDAGKLASLDFHNPRLLIVNDSQRLVNELFSVPAMLSEYKLNFGVAKSSLKPLILAKFLIAQEKLSDVLVFTKSNESSIRLCTLLQAIFDRICLQEKVKVGFMNLTNNRTSLRSKILKDFTSQKINILVATDLIARGLDVTSIKDVVNYDLLNSSREYVHRVGRTARANQAGNAYNLVFGKGEEKWFKTISSEVSRNNDVKDVEVNLKQLISDEDEKLYQEALQSLQDQVRK</sequence>
<protein>
    <recommendedName>
        <fullName>ATP-dependent RNA helicase DBP6</fullName>
        <ecNumber>3.6.4.13</ecNumber>
    </recommendedName>
</protein>
<keyword id="KW-0067">ATP-binding</keyword>
<keyword id="KW-0347">Helicase</keyword>
<keyword id="KW-0378">Hydrolase</keyword>
<keyword id="KW-0547">Nucleotide-binding</keyword>
<keyword id="KW-0539">Nucleus</keyword>
<keyword id="KW-1185">Reference proteome</keyword>
<keyword id="KW-0690">Ribosome biogenesis</keyword>
<keyword id="KW-0694">RNA-binding</keyword>
<keyword id="KW-0698">rRNA processing</keyword>
<organism>
    <name type="scientific">Lodderomyces elongisporus (strain ATCC 11503 / CBS 2605 / JCM 1781 / NBRC 1676 / NRRL YB-4239)</name>
    <name type="common">Yeast</name>
    <name type="synonym">Saccharomyces elongisporus</name>
    <dbReference type="NCBI Taxonomy" id="379508"/>
    <lineage>
        <taxon>Eukaryota</taxon>
        <taxon>Fungi</taxon>
        <taxon>Dikarya</taxon>
        <taxon>Ascomycota</taxon>
        <taxon>Saccharomycotina</taxon>
        <taxon>Pichiomycetes</taxon>
        <taxon>Debaryomycetaceae</taxon>
        <taxon>Candida/Lodderomyces clade</taxon>
        <taxon>Lodderomyces</taxon>
    </lineage>
</organism>